<sequence>MESELYECDVLIIGSGGAGCRAAIEVSEHKLTPIIVSKGLSFKSGCTGMAEGGYNAAFACVDPEDSPDVHFEDTMRGGGFINDPRLVRILVDEAPDRLRDLEEYGALFDRQESGLLDQRPFGGQTYRRTCYHGDRTGHEMITALKEEVIRRDIETIDEVMITSLLVEDGSVLGAMGVSIMNSEPVAFRASSTILASGGAGHIYPVTSNTMQKGGDGFAIAWKAGADLIDMEQVQFHPTGMVYPESRRGVLVTEAVRGEGGILLNSEGERFMGRYDPRGELATRDVVARAIYTEIMEGRGTENGGVYLDVSHLPDEVIEEKLETMLLQFLDVGVDIRSEPMEVAPTAHHFMGGVRIDEWGRTNLKNLFAAGEVSGGVHGANRLGGNALADTQVFGRRAGISAAKNAMSSSRRHVRSLIEEEEQRIKDMVRDGSIRPAEIRDELHEAMWSDVAIVRSRRSLESAMSRISTLMDKLGDLDVPETGGFNSNLLEALELENMLITASLVTRSALIREESRGSHYREDFPETRPEWKRSILLNRKMEPQFIGR</sequence>
<evidence type="ECO:0000269" key="1">
    <source>
    </source>
</evidence>
<evidence type="ECO:0000269" key="2">
    <source>
    </source>
</evidence>
<evidence type="ECO:0000303" key="3">
    <source>
    </source>
</evidence>
<evidence type="ECO:0000303" key="4">
    <source>
    </source>
</evidence>
<evidence type="ECO:0000305" key="5"/>
<evidence type="ECO:0000312" key="6">
    <source>
        <dbReference type="EMBL" id="ADL57698.1"/>
    </source>
</evidence>
<feature type="chain" id="PRO_0000430753" description="Fumarate reductase (CoM/CoB) subunit A">
    <location>
        <begin position="1"/>
        <end position="547"/>
    </location>
</feature>
<feature type="sequence conflict" description="In Ref. 1; CAA04398." ref="1">
    <original>Y</original>
    <variation>D</variation>
    <location>
        <position position="6"/>
    </location>
</feature>
<feature type="sequence conflict" description="In Ref. 1; CAA04398." ref="1">
    <original>R</original>
    <variation>E</variation>
    <location>
        <position position="128"/>
    </location>
</feature>
<feature type="sequence conflict" description="In Ref. 1; CAA04398." ref="1">
    <original>R</original>
    <variation>K</variation>
    <location>
        <position position="256"/>
    </location>
</feature>
<feature type="sequence conflict" description="In Ref. 1; CAA04398." ref="1">
    <original>PDEVIEEK</original>
    <variation>LMRYRGE</variation>
    <location>
        <begin position="313"/>
        <end position="320"/>
    </location>
</feature>
<feature type="sequence conflict" description="In Ref. 1; CAA04398." ref="1">
    <original>PMEVA</original>
    <variation>QWRL</variation>
    <location>
        <begin position="339"/>
        <end position="343"/>
    </location>
</feature>
<feature type="sequence conflict" description="In Ref. 1; CAA04398." ref="1">
    <original>R</original>
    <variation>T</variation>
    <location>
        <position position="360"/>
    </location>
</feature>
<feature type="sequence conflict" description="In Ref. 1; CAA04398." ref="1">
    <original>F</original>
    <variation>Y</variation>
    <location>
        <position position="367"/>
    </location>
</feature>
<comment type="function">
    <text evidence="2">Catalyzes the reduction of fumarate with reduced coenzyme M (CoM-S-H) and coenzyme B (CoB-S-H). In vitro, is able to reduces fumarate with reduced benzyl viologen, oxidize CoM-S-H and CoB-S-H to CoM-S-S-CoB with methylene blue, and reduce CoM-S-S-CoB with reduced benzyl viologen. The enzyme has specificity for the two thiol compounds as the CoB--CoM heterodisulfide reductase. The enzyme is very sensitive to oxygen.</text>
</comment>
<comment type="catalytic activity">
    <reaction evidence="2">
        <text>coenzyme B + coenzyme M + fumarate = coenzyme M-coenzyme B heterodisulfide + succinate</text>
        <dbReference type="Rhea" id="RHEA:40235"/>
        <dbReference type="ChEBI" id="CHEBI:29806"/>
        <dbReference type="ChEBI" id="CHEBI:30031"/>
        <dbReference type="ChEBI" id="CHEBI:58319"/>
        <dbReference type="ChEBI" id="CHEBI:58411"/>
        <dbReference type="ChEBI" id="CHEBI:58596"/>
        <dbReference type="EC" id="1.3.4.1"/>
    </reaction>
</comment>
<comment type="cofactor">
    <cofactor evidence="2">
        <name>an oxidized flavin</name>
        <dbReference type="ChEBI" id="CHEBI:60531"/>
    </cofactor>
    <text evidence="2">Binds 1 flavin covalently per subunit.</text>
</comment>
<comment type="biophysicochemical properties">
    <kinetics>
        <KM evidence="1">0.2 mM for fumarate</KM>
    </kinetics>
    <phDependence>
        <text evidence="1">Optimum pH is7.0.</text>
    </phDependence>
    <temperatureDependence>
        <text evidence="1">Optimum temperature is 75 degrees Celsius.</text>
    </temperatureDependence>
</comment>
<comment type="subunit">
    <text evidence="2">Subunit A of the heterodimeric fumarate reductase of methanogenic Archaea, composed of subunits A (TfrA) and B (TfrB).</text>
</comment>
<comment type="subcellular location">
    <subcellularLocation>
        <location evidence="3">Cytoplasm</location>
    </subcellularLocation>
</comment>
<comment type="similarity">
    <text evidence="5">Belongs to the FAD-dependent oxidoreductase 2 family.</text>
</comment>
<organism evidence="6">
    <name type="scientific">Methanothermobacter marburgensis (strain ATCC BAA-927 / DSM 2133 / JCM 14651 / NBRC 100331 / OCM 82 / Marburg)</name>
    <name type="common">Methanobacterium thermoautotrophicum</name>
    <dbReference type="NCBI Taxonomy" id="79929"/>
    <lineage>
        <taxon>Archaea</taxon>
        <taxon>Methanobacteriati</taxon>
        <taxon>Methanobacteriota</taxon>
        <taxon>Methanomada group</taxon>
        <taxon>Methanobacteria</taxon>
        <taxon>Methanobacteriales</taxon>
        <taxon>Methanobacteriaceae</taxon>
        <taxon>Methanothermobacter</taxon>
    </lineage>
</organism>
<keyword id="KW-0963">Cytoplasm</keyword>
<keyword id="KW-0903">Direct protein sequencing</keyword>
<keyword id="KW-0285">Flavoprotein</keyword>
<keyword id="KW-0560">Oxidoreductase</keyword>
<dbReference type="EC" id="1.3.4.1" evidence="2"/>
<dbReference type="EMBL" id="AJ000941">
    <property type="protein sequence ID" value="CAA04398.1"/>
    <property type="molecule type" value="Genomic_DNA"/>
</dbReference>
<dbReference type="EMBL" id="CP001710">
    <property type="protein sequence ID" value="ADL57698.1"/>
    <property type="molecule type" value="Genomic_DNA"/>
</dbReference>
<dbReference type="RefSeq" id="WP_013294927.1">
    <property type="nucleotide sequence ID" value="NC_014408.1"/>
</dbReference>
<dbReference type="SMR" id="D9PU00"/>
<dbReference type="STRING" id="79929.MTBMA_c00880"/>
<dbReference type="PaxDb" id="79929-MTBMA_c00880"/>
<dbReference type="GeneID" id="77398871"/>
<dbReference type="GeneID" id="9703793"/>
<dbReference type="KEGG" id="mmg:MTBMA_c00880"/>
<dbReference type="PATRIC" id="fig|79929.8.peg.86"/>
<dbReference type="HOGENOM" id="CLU_014312_8_1_2"/>
<dbReference type="OrthoDB" id="23539at2157"/>
<dbReference type="Proteomes" id="UP000000345">
    <property type="component" value="Chromosome"/>
</dbReference>
<dbReference type="GO" id="GO:0005737">
    <property type="term" value="C:cytoplasm"/>
    <property type="evidence" value="ECO:0007669"/>
    <property type="project" value="UniProtKB-SubCell"/>
</dbReference>
<dbReference type="GO" id="GO:0050660">
    <property type="term" value="F:flavin adenine dinucleotide binding"/>
    <property type="evidence" value="ECO:0000314"/>
    <property type="project" value="UniProtKB"/>
</dbReference>
<dbReference type="GO" id="GO:0016627">
    <property type="term" value="F:oxidoreductase activity, acting on the CH-CH group of donors"/>
    <property type="evidence" value="ECO:0000314"/>
    <property type="project" value="UniProtKB"/>
</dbReference>
<dbReference type="GO" id="GO:0006106">
    <property type="term" value="P:fumarate metabolic process"/>
    <property type="evidence" value="ECO:0000314"/>
    <property type="project" value="UniProtKB"/>
</dbReference>
<dbReference type="FunFam" id="3.90.700.10:FF:000002">
    <property type="entry name" value="L-aspartate oxidase"/>
    <property type="match status" value="1"/>
</dbReference>
<dbReference type="Gene3D" id="3.50.50.60">
    <property type="entry name" value="FAD/NAD(P)-binding domain"/>
    <property type="match status" value="1"/>
</dbReference>
<dbReference type="Gene3D" id="1.20.58.100">
    <property type="entry name" value="Fumarate reductase/succinate dehydrogenase flavoprotein-like, C-terminal domain"/>
    <property type="match status" value="1"/>
</dbReference>
<dbReference type="Gene3D" id="3.90.700.10">
    <property type="entry name" value="Succinate dehydrogenase/fumarate reductase flavoprotein, catalytic domain"/>
    <property type="match status" value="1"/>
</dbReference>
<dbReference type="InterPro" id="IPR003953">
    <property type="entry name" value="FAD-dep_OxRdtase_2_FAD-bd"/>
</dbReference>
<dbReference type="InterPro" id="IPR036188">
    <property type="entry name" value="FAD/NAD-bd_sf"/>
</dbReference>
<dbReference type="InterPro" id="IPR037099">
    <property type="entry name" value="Fum_R/Succ_DH_flav-like_C_sf"/>
</dbReference>
<dbReference type="InterPro" id="IPR015939">
    <property type="entry name" value="Fum_Rdtase/Succ_DH_flav-like_C"/>
</dbReference>
<dbReference type="InterPro" id="IPR030664">
    <property type="entry name" value="SdhA/FrdA/AprA"/>
</dbReference>
<dbReference type="InterPro" id="IPR027477">
    <property type="entry name" value="Succ_DH/fumarate_Rdtase_cat_sf"/>
</dbReference>
<dbReference type="NCBIfam" id="NF004900">
    <property type="entry name" value="PRK06263.1"/>
    <property type="match status" value="1"/>
</dbReference>
<dbReference type="PANTHER" id="PTHR11632">
    <property type="entry name" value="SUCCINATE DEHYDROGENASE 2 FLAVOPROTEIN SUBUNIT"/>
    <property type="match status" value="1"/>
</dbReference>
<dbReference type="PANTHER" id="PTHR11632:SF51">
    <property type="entry name" value="SUCCINATE DEHYDROGENASE [UBIQUINONE] FLAVOPROTEIN SUBUNIT, MITOCHONDRIAL"/>
    <property type="match status" value="1"/>
</dbReference>
<dbReference type="Pfam" id="PF00890">
    <property type="entry name" value="FAD_binding_2"/>
    <property type="match status" value="1"/>
</dbReference>
<dbReference type="Pfam" id="PF02910">
    <property type="entry name" value="Succ_DH_flav_C"/>
    <property type="match status" value="1"/>
</dbReference>
<dbReference type="PIRSF" id="PIRSF000171">
    <property type="entry name" value="SDHA_APRA_LASPO"/>
    <property type="match status" value="1"/>
</dbReference>
<dbReference type="PRINTS" id="PR00368">
    <property type="entry name" value="FADPNR"/>
</dbReference>
<dbReference type="SUPFAM" id="SSF51905">
    <property type="entry name" value="FAD/NAD(P)-binding domain"/>
    <property type="match status" value="1"/>
</dbReference>
<dbReference type="SUPFAM" id="SSF46977">
    <property type="entry name" value="Succinate dehydrogenase/fumarate reductase flavoprotein C-terminal domain"/>
    <property type="match status" value="1"/>
</dbReference>
<dbReference type="SUPFAM" id="SSF56425">
    <property type="entry name" value="Succinate dehydrogenase/fumarate reductase flavoprotein, catalytic domain"/>
    <property type="match status" value="1"/>
</dbReference>
<name>TFRA_METTM</name>
<proteinExistence type="evidence at protein level"/>
<reference key="1">
    <citation type="journal article" date="1998" name="Eur. J. Biochem.">
        <title>Thiol:fumarate reductase (Tfr) from Methanobacterium thermoautotrophicum--identification of the catalytic sites for fumarate reduction and thiol oxidation.</title>
        <authorList>
            <person name="Heim S."/>
            <person name="Kunkel A."/>
            <person name="Thauer R.K."/>
            <person name="Hedderich R."/>
        </authorList>
    </citation>
    <scope>NUCLEOTIDE SEQUENCE [GENOMIC DNA]</scope>
    <scope>PROTEIN SEQUENCE OF 1-19 AND 368-380</scope>
    <scope>FUNCTION</scope>
    <scope>CATALYTIC ACTIVITY</scope>
    <scope>COFACTOR</scope>
    <scope>SUBUNIT</scope>
    <source>
        <strain evidence="2">ATCC BAA-927 / DSM 2133 / JCM 14651 / NBRC 100331 / OCM 82 / Marburg</strain>
    </source>
</reference>
<reference key="2">
    <citation type="journal article" date="2010" name="J. Bacteriol.">
        <title>Complete genome sequence of Methanothermobacter marburgensis, a methanoarchaeon model organism.</title>
        <authorList>
            <person name="Liesegang H."/>
            <person name="Kaster A.K."/>
            <person name="Wiezer A."/>
            <person name="Goenrich M."/>
            <person name="Wollherr A."/>
            <person name="Seedorf H."/>
            <person name="Gottschalk G."/>
            <person name="Thauer R.K."/>
        </authorList>
    </citation>
    <scope>NUCLEOTIDE SEQUENCE [LARGE SCALE GENOMIC DNA]</scope>
    <source>
        <strain evidence="6">ATCC BAA-927 / DSM 2133 / JCM 14651 / NBRC 100331 / OCM 82 / Marburg</strain>
    </source>
</reference>
<reference key="3">
    <citation type="journal article" date="1989" name="Appl. Environ. Microbiol.">
        <title>Purification and characterization of an anabolic fumarate reductase from Methanobacterium thermoautotrophicum.</title>
        <authorList>
            <person name="Khandekar S.S."/>
            <person name="Eirich L.D."/>
        </authorList>
    </citation>
    <scope>BIOPHYSICOCHEMICAL PROPERTIES</scope>
    <scope>SUBCELLULAR LOCATION</scope>
</reference>
<gene>
    <name evidence="4" type="primary">tfrA</name>
    <name evidence="6" type="ordered locus">MTBMA_c00880</name>
</gene>
<accession>D9PU00</accession>
<accession>O53141</accession>
<protein>
    <recommendedName>
        <fullName evidence="5">Fumarate reductase (CoM/CoB) subunit A</fullName>
        <ecNumber evidence="2">1.3.4.1</ecNumber>
    </recommendedName>
    <alternativeName>
        <fullName evidence="4">Thiol:fumarate reductase subunit A</fullName>
    </alternativeName>
</protein>